<accession>Q8Y4I2</accession>
<reference key="1">
    <citation type="journal article" date="2001" name="Science">
        <title>Comparative genomics of Listeria species.</title>
        <authorList>
            <person name="Glaser P."/>
            <person name="Frangeul L."/>
            <person name="Buchrieser C."/>
            <person name="Rusniok C."/>
            <person name="Amend A."/>
            <person name="Baquero F."/>
            <person name="Berche P."/>
            <person name="Bloecker H."/>
            <person name="Brandt P."/>
            <person name="Chakraborty T."/>
            <person name="Charbit A."/>
            <person name="Chetouani F."/>
            <person name="Couve E."/>
            <person name="de Daruvar A."/>
            <person name="Dehoux P."/>
            <person name="Domann E."/>
            <person name="Dominguez-Bernal G."/>
            <person name="Duchaud E."/>
            <person name="Durant L."/>
            <person name="Dussurget O."/>
            <person name="Entian K.-D."/>
            <person name="Fsihi H."/>
            <person name="Garcia-del Portillo F."/>
            <person name="Garrido P."/>
            <person name="Gautier L."/>
            <person name="Goebel W."/>
            <person name="Gomez-Lopez N."/>
            <person name="Hain T."/>
            <person name="Hauf J."/>
            <person name="Jackson D."/>
            <person name="Jones L.-M."/>
            <person name="Kaerst U."/>
            <person name="Kreft J."/>
            <person name="Kuhn M."/>
            <person name="Kunst F."/>
            <person name="Kurapkat G."/>
            <person name="Madueno E."/>
            <person name="Maitournam A."/>
            <person name="Mata Vicente J."/>
            <person name="Ng E."/>
            <person name="Nedjari H."/>
            <person name="Nordsiek G."/>
            <person name="Novella S."/>
            <person name="de Pablos B."/>
            <person name="Perez-Diaz J.-C."/>
            <person name="Purcell R."/>
            <person name="Remmel B."/>
            <person name="Rose M."/>
            <person name="Schlueter T."/>
            <person name="Simoes N."/>
            <person name="Tierrez A."/>
            <person name="Vazquez-Boland J.-A."/>
            <person name="Voss H."/>
            <person name="Wehland J."/>
            <person name="Cossart P."/>
        </authorList>
    </citation>
    <scope>NUCLEOTIDE SEQUENCE [LARGE SCALE GENOMIC DNA]</scope>
    <source>
        <strain>ATCC BAA-679 / EGD-e</strain>
    </source>
</reference>
<protein>
    <recommendedName>
        <fullName evidence="1">Phosphoglycerate kinase</fullName>
        <ecNumber evidence="1">2.7.2.3</ecNumber>
    </recommendedName>
</protein>
<gene>
    <name evidence="1" type="primary">pgk</name>
    <name type="ordered locus">lmo2458</name>
</gene>
<keyword id="KW-0067">ATP-binding</keyword>
<keyword id="KW-0963">Cytoplasm</keyword>
<keyword id="KW-0324">Glycolysis</keyword>
<keyword id="KW-0418">Kinase</keyword>
<keyword id="KW-0547">Nucleotide-binding</keyword>
<keyword id="KW-1185">Reference proteome</keyword>
<keyword id="KW-0808">Transferase</keyword>
<comment type="catalytic activity">
    <reaction evidence="1">
        <text>(2R)-3-phosphoglycerate + ATP = (2R)-3-phospho-glyceroyl phosphate + ADP</text>
        <dbReference type="Rhea" id="RHEA:14801"/>
        <dbReference type="ChEBI" id="CHEBI:30616"/>
        <dbReference type="ChEBI" id="CHEBI:57604"/>
        <dbReference type="ChEBI" id="CHEBI:58272"/>
        <dbReference type="ChEBI" id="CHEBI:456216"/>
        <dbReference type="EC" id="2.7.2.3"/>
    </reaction>
</comment>
<comment type="pathway">
    <text evidence="1">Carbohydrate degradation; glycolysis; pyruvate from D-glyceraldehyde 3-phosphate: step 2/5.</text>
</comment>
<comment type="subunit">
    <text evidence="1">Monomer.</text>
</comment>
<comment type="subcellular location">
    <subcellularLocation>
        <location evidence="1">Cytoplasm</location>
    </subcellularLocation>
</comment>
<comment type="similarity">
    <text evidence="1">Belongs to the phosphoglycerate kinase family.</text>
</comment>
<name>PGK_LISMO</name>
<proteinExistence type="inferred from homology"/>
<feature type="chain" id="PRO_0000145962" description="Phosphoglycerate kinase">
    <location>
        <begin position="1"/>
        <end position="396"/>
    </location>
</feature>
<feature type="binding site" evidence="1">
    <location>
        <begin position="21"/>
        <end position="23"/>
    </location>
    <ligand>
        <name>substrate</name>
    </ligand>
</feature>
<feature type="binding site" evidence="1">
    <location>
        <position position="36"/>
    </location>
    <ligand>
        <name>substrate</name>
    </ligand>
</feature>
<feature type="binding site" evidence="1">
    <location>
        <begin position="59"/>
        <end position="62"/>
    </location>
    <ligand>
        <name>substrate</name>
    </ligand>
</feature>
<feature type="binding site" evidence="1">
    <location>
        <position position="119"/>
    </location>
    <ligand>
        <name>substrate</name>
    </ligand>
</feature>
<feature type="binding site" evidence="1">
    <location>
        <position position="156"/>
    </location>
    <ligand>
        <name>substrate</name>
    </ligand>
</feature>
<feature type="binding site" evidence="1">
    <location>
        <position position="206"/>
    </location>
    <ligand>
        <name>ATP</name>
        <dbReference type="ChEBI" id="CHEBI:30616"/>
    </ligand>
</feature>
<feature type="binding site" evidence="1">
    <location>
        <position position="294"/>
    </location>
    <ligand>
        <name>ATP</name>
        <dbReference type="ChEBI" id="CHEBI:30616"/>
    </ligand>
</feature>
<feature type="binding site" evidence="1">
    <location>
        <position position="325"/>
    </location>
    <ligand>
        <name>ATP</name>
        <dbReference type="ChEBI" id="CHEBI:30616"/>
    </ligand>
</feature>
<feature type="binding site" evidence="1">
    <location>
        <begin position="352"/>
        <end position="355"/>
    </location>
    <ligand>
        <name>ATP</name>
        <dbReference type="ChEBI" id="CHEBI:30616"/>
    </ligand>
</feature>
<sequence length="396" mass="42104">MAKKVVTDLDLKDKKVLVRVDFNVPMKDGKITNDNRIVAALPTIEYILEQNGKAILFSHLGKVKTEEDKEGKSLRPVAVRLSELLGKEVKFVPTTRGPELEKAIDELKDGEVLLFENTRFEDIDGKKESKNDPELGKYWASLGDVFVNDAFGTAHRAHASNVGIASNLESAAGFLMEKEIKFIGGVVDNPARPLVAILGGAKVSDKIGVIENLLTKADKVLVGGGMTFTFMAAQGQEIGKSLLEADKVELAKGLLEKAGDKLVLPVDAVVSKEFSNDAPFHTVSADSIPADEMGLDIGQATIDLFTKELQGAKTVVWNGPMGVFELSNFAKGTIGVCEAIANLTDATTIIGGGDSAAAAMDLGFADKFTHISTGGGASLEYLEGKELPGVASISDK</sequence>
<evidence type="ECO:0000255" key="1">
    <source>
        <dbReference type="HAMAP-Rule" id="MF_00145"/>
    </source>
</evidence>
<organism>
    <name type="scientific">Listeria monocytogenes serovar 1/2a (strain ATCC BAA-679 / EGD-e)</name>
    <dbReference type="NCBI Taxonomy" id="169963"/>
    <lineage>
        <taxon>Bacteria</taxon>
        <taxon>Bacillati</taxon>
        <taxon>Bacillota</taxon>
        <taxon>Bacilli</taxon>
        <taxon>Bacillales</taxon>
        <taxon>Listeriaceae</taxon>
        <taxon>Listeria</taxon>
    </lineage>
</organism>
<dbReference type="EC" id="2.7.2.3" evidence="1"/>
<dbReference type="EMBL" id="AL591983">
    <property type="protein sequence ID" value="CAD00536.1"/>
    <property type="molecule type" value="Genomic_DNA"/>
</dbReference>
<dbReference type="PIR" id="AB1382">
    <property type="entry name" value="AB1382"/>
</dbReference>
<dbReference type="RefSeq" id="NP_465981.1">
    <property type="nucleotide sequence ID" value="NC_003210.1"/>
</dbReference>
<dbReference type="RefSeq" id="WP_010989997.1">
    <property type="nucleotide sequence ID" value="NZ_CP149495.1"/>
</dbReference>
<dbReference type="SMR" id="Q8Y4I2"/>
<dbReference type="STRING" id="169963.gene:17595168"/>
<dbReference type="PaxDb" id="169963-lmo2458"/>
<dbReference type="EnsemblBacteria" id="CAD00536">
    <property type="protein sequence ID" value="CAD00536"/>
    <property type="gene ID" value="CAD00536"/>
</dbReference>
<dbReference type="GeneID" id="987378"/>
<dbReference type="KEGG" id="lmo:lmo2458"/>
<dbReference type="PATRIC" id="fig|169963.11.peg.2517"/>
<dbReference type="eggNOG" id="COG0126">
    <property type="taxonomic scope" value="Bacteria"/>
</dbReference>
<dbReference type="HOGENOM" id="CLU_025427_0_2_9"/>
<dbReference type="OrthoDB" id="9808460at2"/>
<dbReference type="PhylomeDB" id="Q8Y4I2"/>
<dbReference type="BioCyc" id="LMON169963:LMO2458-MONOMER"/>
<dbReference type="UniPathway" id="UPA00109">
    <property type="reaction ID" value="UER00185"/>
</dbReference>
<dbReference type="Proteomes" id="UP000000817">
    <property type="component" value="Chromosome"/>
</dbReference>
<dbReference type="GO" id="GO:0005829">
    <property type="term" value="C:cytosol"/>
    <property type="evidence" value="ECO:0000318"/>
    <property type="project" value="GO_Central"/>
</dbReference>
<dbReference type="GO" id="GO:0043531">
    <property type="term" value="F:ADP binding"/>
    <property type="evidence" value="ECO:0000318"/>
    <property type="project" value="GO_Central"/>
</dbReference>
<dbReference type="GO" id="GO:0005524">
    <property type="term" value="F:ATP binding"/>
    <property type="evidence" value="ECO:0000318"/>
    <property type="project" value="GO_Central"/>
</dbReference>
<dbReference type="GO" id="GO:0004618">
    <property type="term" value="F:phosphoglycerate kinase activity"/>
    <property type="evidence" value="ECO:0000318"/>
    <property type="project" value="GO_Central"/>
</dbReference>
<dbReference type="GO" id="GO:0006094">
    <property type="term" value="P:gluconeogenesis"/>
    <property type="evidence" value="ECO:0000318"/>
    <property type="project" value="GO_Central"/>
</dbReference>
<dbReference type="GO" id="GO:0006096">
    <property type="term" value="P:glycolytic process"/>
    <property type="evidence" value="ECO:0000318"/>
    <property type="project" value="GO_Central"/>
</dbReference>
<dbReference type="CDD" id="cd00318">
    <property type="entry name" value="Phosphoglycerate_kinase"/>
    <property type="match status" value="1"/>
</dbReference>
<dbReference type="FunFam" id="3.40.50.1260:FF:000001">
    <property type="entry name" value="Phosphoglycerate kinase"/>
    <property type="match status" value="1"/>
</dbReference>
<dbReference type="FunFam" id="3.40.50.1260:FF:000008">
    <property type="entry name" value="Phosphoglycerate kinase"/>
    <property type="match status" value="1"/>
</dbReference>
<dbReference type="Gene3D" id="3.40.50.1260">
    <property type="entry name" value="Phosphoglycerate kinase, N-terminal domain"/>
    <property type="match status" value="2"/>
</dbReference>
<dbReference type="HAMAP" id="MF_00145">
    <property type="entry name" value="Phosphoglyc_kinase"/>
    <property type="match status" value="1"/>
</dbReference>
<dbReference type="InterPro" id="IPR001576">
    <property type="entry name" value="Phosphoglycerate_kinase"/>
</dbReference>
<dbReference type="InterPro" id="IPR015911">
    <property type="entry name" value="Phosphoglycerate_kinase_CS"/>
</dbReference>
<dbReference type="InterPro" id="IPR015824">
    <property type="entry name" value="Phosphoglycerate_kinase_N"/>
</dbReference>
<dbReference type="InterPro" id="IPR036043">
    <property type="entry name" value="Phosphoglycerate_kinase_sf"/>
</dbReference>
<dbReference type="PANTHER" id="PTHR11406">
    <property type="entry name" value="PHOSPHOGLYCERATE KINASE"/>
    <property type="match status" value="1"/>
</dbReference>
<dbReference type="PANTHER" id="PTHR11406:SF23">
    <property type="entry name" value="PHOSPHOGLYCERATE KINASE 1, CHLOROPLASTIC-RELATED"/>
    <property type="match status" value="1"/>
</dbReference>
<dbReference type="Pfam" id="PF00162">
    <property type="entry name" value="PGK"/>
    <property type="match status" value="1"/>
</dbReference>
<dbReference type="PIRSF" id="PIRSF000724">
    <property type="entry name" value="Pgk"/>
    <property type="match status" value="1"/>
</dbReference>
<dbReference type="PRINTS" id="PR00477">
    <property type="entry name" value="PHGLYCKINASE"/>
</dbReference>
<dbReference type="SUPFAM" id="SSF53748">
    <property type="entry name" value="Phosphoglycerate kinase"/>
    <property type="match status" value="1"/>
</dbReference>
<dbReference type="PROSITE" id="PS00111">
    <property type="entry name" value="PGLYCERATE_KINASE"/>
    <property type="match status" value="1"/>
</dbReference>